<keyword id="KW-0963">Cytoplasm</keyword>
<keyword id="KW-0227">DNA damage</keyword>
<keyword id="KW-0233">DNA recombination</keyword>
<keyword id="KW-0234">DNA repair</keyword>
<keyword id="KW-0238">DNA-binding</keyword>
<keyword id="KW-1185">Reference proteome</keyword>
<gene>
    <name evidence="1" type="primary">ruvA</name>
    <name type="ordered locus">Mmc1_0477</name>
</gene>
<accession>A0L4V9</accession>
<comment type="function">
    <text evidence="1">The RuvA-RuvB-RuvC complex processes Holliday junction (HJ) DNA during genetic recombination and DNA repair, while the RuvA-RuvB complex plays an important role in the rescue of blocked DNA replication forks via replication fork reversal (RFR). RuvA specifically binds to HJ cruciform DNA, conferring on it an open structure. The RuvB hexamer acts as an ATP-dependent pump, pulling dsDNA into and through the RuvAB complex. HJ branch migration allows RuvC to scan DNA until it finds its consensus sequence, where it cleaves and resolves the cruciform DNA.</text>
</comment>
<comment type="subunit">
    <text evidence="1">Homotetramer. Forms an RuvA(8)-RuvB(12)-Holliday junction (HJ) complex. HJ DNA is sandwiched between 2 RuvA tetramers; dsDNA enters through RuvA and exits via RuvB. An RuvB hexamer assembles on each DNA strand where it exits the tetramer. Each RuvB hexamer is contacted by two RuvA subunits (via domain III) on 2 adjacent RuvB subunits; this complex drives branch migration. In the full resolvosome a probable DNA-RuvA(4)-RuvB(12)-RuvC(2) complex forms which resolves the HJ.</text>
</comment>
<comment type="subcellular location">
    <subcellularLocation>
        <location evidence="1">Cytoplasm</location>
    </subcellularLocation>
</comment>
<comment type="domain">
    <text evidence="1">Has three domains with a flexible linker between the domains II and III and assumes an 'L' shape. Domain III is highly mobile and contacts RuvB.</text>
</comment>
<comment type="similarity">
    <text evidence="1">Belongs to the RuvA family.</text>
</comment>
<evidence type="ECO:0000255" key="1">
    <source>
        <dbReference type="HAMAP-Rule" id="MF_00031"/>
    </source>
</evidence>
<organism>
    <name type="scientific">Magnetococcus marinus (strain ATCC BAA-1437 / JCM 17883 / MC-1)</name>
    <dbReference type="NCBI Taxonomy" id="156889"/>
    <lineage>
        <taxon>Bacteria</taxon>
        <taxon>Pseudomonadati</taxon>
        <taxon>Pseudomonadota</taxon>
        <taxon>Alphaproteobacteria</taxon>
        <taxon>Magnetococcales</taxon>
        <taxon>Magnetococcaceae</taxon>
        <taxon>Magnetococcus</taxon>
    </lineage>
</organism>
<dbReference type="EMBL" id="CP000471">
    <property type="protein sequence ID" value="ABK43002.1"/>
    <property type="molecule type" value="Genomic_DNA"/>
</dbReference>
<dbReference type="RefSeq" id="WP_011712169.1">
    <property type="nucleotide sequence ID" value="NC_008576.1"/>
</dbReference>
<dbReference type="SMR" id="A0L4V9"/>
<dbReference type="STRING" id="156889.Mmc1_0477"/>
<dbReference type="KEGG" id="mgm:Mmc1_0477"/>
<dbReference type="eggNOG" id="COG0632">
    <property type="taxonomic scope" value="Bacteria"/>
</dbReference>
<dbReference type="HOGENOM" id="CLU_087936_0_0_5"/>
<dbReference type="OrthoDB" id="5293449at2"/>
<dbReference type="Proteomes" id="UP000002586">
    <property type="component" value="Chromosome"/>
</dbReference>
<dbReference type="GO" id="GO:0005737">
    <property type="term" value="C:cytoplasm"/>
    <property type="evidence" value="ECO:0007669"/>
    <property type="project" value="UniProtKB-SubCell"/>
</dbReference>
<dbReference type="GO" id="GO:0009379">
    <property type="term" value="C:Holliday junction helicase complex"/>
    <property type="evidence" value="ECO:0007669"/>
    <property type="project" value="InterPro"/>
</dbReference>
<dbReference type="GO" id="GO:0048476">
    <property type="term" value="C:Holliday junction resolvase complex"/>
    <property type="evidence" value="ECO:0007669"/>
    <property type="project" value="UniProtKB-UniRule"/>
</dbReference>
<dbReference type="GO" id="GO:0005524">
    <property type="term" value="F:ATP binding"/>
    <property type="evidence" value="ECO:0007669"/>
    <property type="project" value="InterPro"/>
</dbReference>
<dbReference type="GO" id="GO:0000400">
    <property type="term" value="F:four-way junction DNA binding"/>
    <property type="evidence" value="ECO:0007669"/>
    <property type="project" value="UniProtKB-UniRule"/>
</dbReference>
<dbReference type="GO" id="GO:0009378">
    <property type="term" value="F:four-way junction helicase activity"/>
    <property type="evidence" value="ECO:0007669"/>
    <property type="project" value="InterPro"/>
</dbReference>
<dbReference type="GO" id="GO:0006310">
    <property type="term" value="P:DNA recombination"/>
    <property type="evidence" value="ECO:0007669"/>
    <property type="project" value="UniProtKB-UniRule"/>
</dbReference>
<dbReference type="GO" id="GO:0006281">
    <property type="term" value="P:DNA repair"/>
    <property type="evidence" value="ECO:0007669"/>
    <property type="project" value="UniProtKB-UniRule"/>
</dbReference>
<dbReference type="CDD" id="cd14332">
    <property type="entry name" value="UBA_RuvA_C"/>
    <property type="match status" value="1"/>
</dbReference>
<dbReference type="Gene3D" id="1.10.150.20">
    <property type="entry name" value="5' to 3' exonuclease, C-terminal subdomain"/>
    <property type="match status" value="1"/>
</dbReference>
<dbReference type="Gene3D" id="1.10.8.10">
    <property type="entry name" value="DNA helicase RuvA subunit, C-terminal domain"/>
    <property type="match status" value="1"/>
</dbReference>
<dbReference type="Gene3D" id="2.40.50.140">
    <property type="entry name" value="Nucleic acid-binding proteins"/>
    <property type="match status" value="1"/>
</dbReference>
<dbReference type="HAMAP" id="MF_00031">
    <property type="entry name" value="DNA_HJ_migration_RuvA"/>
    <property type="match status" value="1"/>
</dbReference>
<dbReference type="InterPro" id="IPR013849">
    <property type="entry name" value="DNA_helicase_Holl-junc_RuvA_I"/>
</dbReference>
<dbReference type="InterPro" id="IPR003583">
    <property type="entry name" value="Hlx-hairpin-Hlx_DNA-bd_motif"/>
</dbReference>
<dbReference type="InterPro" id="IPR012340">
    <property type="entry name" value="NA-bd_OB-fold"/>
</dbReference>
<dbReference type="InterPro" id="IPR000085">
    <property type="entry name" value="RuvA"/>
</dbReference>
<dbReference type="InterPro" id="IPR010994">
    <property type="entry name" value="RuvA_2-like"/>
</dbReference>
<dbReference type="InterPro" id="IPR011114">
    <property type="entry name" value="RuvA_C"/>
</dbReference>
<dbReference type="InterPro" id="IPR036267">
    <property type="entry name" value="RuvA_C_sf"/>
</dbReference>
<dbReference type="NCBIfam" id="TIGR00084">
    <property type="entry name" value="ruvA"/>
    <property type="match status" value="1"/>
</dbReference>
<dbReference type="Pfam" id="PF14520">
    <property type="entry name" value="HHH_5"/>
    <property type="match status" value="1"/>
</dbReference>
<dbReference type="Pfam" id="PF07499">
    <property type="entry name" value="RuvA_C"/>
    <property type="match status" value="1"/>
</dbReference>
<dbReference type="Pfam" id="PF01330">
    <property type="entry name" value="RuvA_N"/>
    <property type="match status" value="1"/>
</dbReference>
<dbReference type="SMART" id="SM00278">
    <property type="entry name" value="HhH1"/>
    <property type="match status" value="2"/>
</dbReference>
<dbReference type="SUPFAM" id="SSF46929">
    <property type="entry name" value="DNA helicase RuvA subunit, C-terminal domain"/>
    <property type="match status" value="1"/>
</dbReference>
<dbReference type="SUPFAM" id="SSF50249">
    <property type="entry name" value="Nucleic acid-binding proteins"/>
    <property type="match status" value="1"/>
</dbReference>
<dbReference type="SUPFAM" id="SSF47781">
    <property type="entry name" value="RuvA domain 2-like"/>
    <property type="match status" value="1"/>
</dbReference>
<feature type="chain" id="PRO_1000002480" description="Holliday junction branch migration complex subunit RuvA">
    <location>
        <begin position="1"/>
        <end position="204"/>
    </location>
</feature>
<feature type="region of interest" description="Domain I" evidence="1">
    <location>
        <begin position="1"/>
        <end position="64"/>
    </location>
</feature>
<feature type="region of interest" description="Domain II" evidence="1">
    <location>
        <begin position="65"/>
        <end position="143"/>
    </location>
</feature>
<feature type="region of interest" description="Flexible linker" evidence="1">
    <location>
        <begin position="144"/>
        <end position="154"/>
    </location>
</feature>
<feature type="region of interest" description="Domain III" evidence="1">
    <location>
        <begin position="154"/>
        <end position="204"/>
    </location>
</feature>
<proteinExistence type="inferred from homology"/>
<name>RUVA_MAGMM</name>
<reference key="1">
    <citation type="journal article" date="2009" name="Appl. Environ. Microbiol.">
        <title>Complete genome sequence of the chemolithoautotrophic marine magnetotactic coccus strain MC-1.</title>
        <authorList>
            <person name="Schubbe S."/>
            <person name="Williams T.J."/>
            <person name="Xie G."/>
            <person name="Kiss H.E."/>
            <person name="Brettin T.S."/>
            <person name="Martinez D."/>
            <person name="Ross C.A."/>
            <person name="Schuler D."/>
            <person name="Cox B.L."/>
            <person name="Nealson K.H."/>
            <person name="Bazylinski D.A."/>
        </authorList>
    </citation>
    <scope>NUCLEOTIDE SEQUENCE [LARGE SCALE GENOMIC DNA]</scope>
    <source>
        <strain>ATCC BAA-1437 / JCM 17883 / MC-1</strain>
    </source>
</reference>
<sequence>MIAQLKGSLAAKHPDHVVMDVHGVGYRVFISLATYNELPTVGEACLLYTVTHVREDAFLLYGFHSESQRKVFNLLTSVNGIGTKLALAALSSHTPEALLTALSREDLTLLCTIPGVGKKTAQRMAMELKDKLGALPMAAPTTAIGAATMAANPAGLREEVASALLNLGYKPPQVDAALAKLFSAGEITDISVALKGALKLLAPA</sequence>
<protein>
    <recommendedName>
        <fullName evidence="1">Holliday junction branch migration complex subunit RuvA</fullName>
    </recommendedName>
</protein>